<gene>
    <name type="ORF">ORF107</name>
</gene>
<dbReference type="EMBL" id="AY509253">
    <property type="protein sequence ID" value="AAS00992.1"/>
    <property type="molecule type" value="Genomic_DNA"/>
</dbReference>
<dbReference type="RefSeq" id="YP_024645.1">
    <property type="nucleotide sequence ID" value="NC_005881.2"/>
</dbReference>
<dbReference type="SMR" id="Q6R7C3"/>
<dbReference type="KEGG" id="vg:2948233"/>
<dbReference type="Proteomes" id="UP000007021">
    <property type="component" value="Segment"/>
</dbReference>
<organismHost>
    <name type="scientific">Magallana gigas</name>
    <name type="common">Pacific oyster</name>
    <name type="synonym">Crassostrea gigas</name>
    <dbReference type="NCBI Taxonomy" id="29159"/>
</organismHost>
<organismHost>
    <name type="scientific">Pecten maximus</name>
    <name type="common">King scallop</name>
    <name type="synonym">Pilgrim's clam</name>
    <dbReference type="NCBI Taxonomy" id="6579"/>
</organismHost>
<protein>
    <recommendedName>
        <fullName>Uncharacterized protein ORF107</fullName>
    </recommendedName>
</protein>
<proteinExistence type="predicted"/>
<accession>Q6R7C3</accession>
<evidence type="ECO:0000255" key="1"/>
<evidence type="ECO:0000256" key="2">
    <source>
        <dbReference type="SAM" id="MobiDB-lite"/>
    </source>
</evidence>
<sequence>MFKITGVVSFIDDDPNAKVKLNSEGRFMEIPLKMAQRFLNNNNDRIKGKKKKIPILFNHFNNLPQLGTVDNLEIIERGVNDNDGLGNKKRKVLQMTATLSNRSFIKALQESSHFYNTTDKHMEYYSPDGFLSGGNSNPSGEMVTGRSAIMKRFPGLSIGHLDNDGYDIEEISLCYAGARPGTILTDASYSDHCGLAEDDTGSNSTAFLKAWAAKPFAMMTSRAGKIAEDINMLGVKNESLVYGLENKEDDVNDKPLPPQQPIDQPIDVEVMKSSLPENNKEDISTTKDTTPNEVEEHNINTIENEISSPFTQKSPDELDTETMSRIQDEVKALAAESASLRDDIKKYIAEALVQKDSGSSSVRRDRSPVDRRDRDRTPPRRERRRRDYDDYDSEDDYEDRRPTKKLFRRSRDEGEFLHSRKNKREHSRNRFDEFEDSRFDEEDRDMYRRRPTPQQSFYEAQSLPRRLLKRQVIQDDFDEEDYYQVRKPAKRQRVIFEDDLDEFYQPPVQQRRLAPRAPVYQEPQYDDYVVVPRQKQQQHVLPAASQRRVVRPQQLRPQFHDQDVEYVTIDPQTGMEVEYEPVAPAPKKRVVKVAQPVQRQVVKQTQPRAPEPVEMEEGEIEEEEEVVEEQLAPVKKMPVPKAVPVKRAEAVDAQPTPPQAAAPTQEYSFKKPTGKTTEAHFDELMDQMF</sequence>
<reference key="1">
    <citation type="journal article" date="2005" name="J. Gen. Virol.">
        <title>A novel class of herpesvirus with bivalve hosts.</title>
        <authorList>
            <person name="Davison A.J."/>
            <person name="Trus B.L."/>
            <person name="Cheng N."/>
            <person name="Steven A.C."/>
            <person name="Watson M.S."/>
            <person name="Cunningham C."/>
            <person name="Le Deuff R.M."/>
            <person name="Renault T."/>
        </authorList>
    </citation>
    <scope>NUCLEOTIDE SEQUENCE [LARGE SCALE GENOMIC DNA]</scope>
</reference>
<keyword id="KW-0175">Coiled coil</keyword>
<keyword id="KW-1185">Reference proteome</keyword>
<organism>
    <name type="scientific">Ostreid herpesvirus 1 (isolate France)</name>
    <name type="common">OsHV-1</name>
    <name type="synonym">Pacific oyster herpesvirus</name>
    <dbReference type="NCBI Taxonomy" id="654903"/>
    <lineage>
        <taxon>Viruses</taxon>
        <taxon>Duplodnaviria</taxon>
        <taxon>Heunggongvirae</taxon>
        <taxon>Peploviricota</taxon>
        <taxon>Herviviricetes</taxon>
        <taxon>Herpesvirales</taxon>
        <taxon>Malacoherpesviridae</taxon>
        <taxon>Ostreavirus</taxon>
        <taxon>Ostreavirus ostreidmalaco1</taxon>
        <taxon>Ostreid herpesvirus 1</taxon>
    </lineage>
</organism>
<feature type="chain" id="PRO_0000385121" description="Uncharacterized protein ORF107">
    <location>
        <begin position="1"/>
        <end position="689"/>
    </location>
</feature>
<feature type="region of interest" description="Disordered" evidence="2">
    <location>
        <begin position="274"/>
        <end position="322"/>
    </location>
</feature>
<feature type="region of interest" description="Disordered" evidence="2">
    <location>
        <begin position="354"/>
        <end position="436"/>
    </location>
</feature>
<feature type="region of interest" description="Disordered" evidence="2">
    <location>
        <begin position="602"/>
        <end position="624"/>
    </location>
</feature>
<feature type="region of interest" description="Disordered" evidence="2">
    <location>
        <begin position="649"/>
        <end position="689"/>
    </location>
</feature>
<feature type="coiled-coil region" evidence="1">
    <location>
        <begin position="320"/>
        <end position="351"/>
    </location>
</feature>
<feature type="compositionally biased region" description="Basic and acidic residues" evidence="2">
    <location>
        <begin position="362"/>
        <end position="388"/>
    </location>
</feature>
<feature type="compositionally biased region" description="Basic and acidic residues" evidence="2">
    <location>
        <begin position="409"/>
        <end position="418"/>
    </location>
</feature>
<feature type="compositionally biased region" description="Acidic residues" evidence="2">
    <location>
        <begin position="613"/>
        <end position="624"/>
    </location>
</feature>
<name>Y107_OSHVF</name>
<comment type="function">
    <text>May act as an apoptosis inhibitor.</text>
</comment>